<name>RL11_ECO5E</name>
<proteinExistence type="inferred from homology"/>
<evidence type="ECO:0000255" key="1">
    <source>
        <dbReference type="HAMAP-Rule" id="MF_00736"/>
    </source>
</evidence>
<evidence type="ECO:0000305" key="2"/>
<protein>
    <recommendedName>
        <fullName evidence="1">Large ribosomal subunit protein uL11</fullName>
    </recommendedName>
    <alternativeName>
        <fullName evidence="2">50S ribosomal protein L11</fullName>
    </alternativeName>
</protein>
<gene>
    <name evidence="1" type="primary">rplK</name>
    <name type="ordered locus">ECH74115_5448</name>
</gene>
<comment type="function">
    <text evidence="1">Forms part of the ribosomal stalk which helps the ribosome interact with GTP-bound translation factors.</text>
</comment>
<comment type="subunit">
    <text evidence="1">Part of the ribosomal stalk of the 50S ribosomal subunit. Interacts with L10 and the large rRNA to form the base of the stalk. L10 forms an elongated spine to which L12 dimers bind in a sequential fashion forming a multimeric L10(L12)X complex.</text>
</comment>
<comment type="PTM">
    <text evidence="1">One or more lysine residues are methylated.</text>
</comment>
<comment type="similarity">
    <text evidence="1">Belongs to the universal ribosomal protein uL11 family.</text>
</comment>
<accession>B5Z079</accession>
<reference key="1">
    <citation type="journal article" date="2011" name="Proc. Natl. Acad. Sci. U.S.A.">
        <title>Genomic anatomy of Escherichia coli O157:H7 outbreaks.</title>
        <authorList>
            <person name="Eppinger M."/>
            <person name="Mammel M.K."/>
            <person name="Leclerc J.E."/>
            <person name="Ravel J."/>
            <person name="Cebula T.A."/>
        </authorList>
    </citation>
    <scope>NUCLEOTIDE SEQUENCE [LARGE SCALE GENOMIC DNA]</scope>
    <source>
        <strain>EC4115 / EHEC</strain>
    </source>
</reference>
<feature type="chain" id="PRO_1000195632" description="Large ribosomal subunit protein uL11">
    <location>
        <begin position="1"/>
        <end position="142"/>
    </location>
</feature>
<dbReference type="EMBL" id="CP001164">
    <property type="protein sequence ID" value="ACI38718.1"/>
    <property type="molecule type" value="Genomic_DNA"/>
</dbReference>
<dbReference type="RefSeq" id="WP_001085926.1">
    <property type="nucleotide sequence ID" value="NC_011353.1"/>
</dbReference>
<dbReference type="SMR" id="B5Z079"/>
<dbReference type="GeneID" id="93777911"/>
<dbReference type="KEGG" id="ecf:ECH74115_5448"/>
<dbReference type="HOGENOM" id="CLU_074237_2_0_6"/>
<dbReference type="GO" id="GO:0022625">
    <property type="term" value="C:cytosolic large ribosomal subunit"/>
    <property type="evidence" value="ECO:0007669"/>
    <property type="project" value="TreeGrafter"/>
</dbReference>
<dbReference type="GO" id="GO:0070180">
    <property type="term" value="F:large ribosomal subunit rRNA binding"/>
    <property type="evidence" value="ECO:0007669"/>
    <property type="project" value="UniProtKB-UniRule"/>
</dbReference>
<dbReference type="GO" id="GO:0003735">
    <property type="term" value="F:structural constituent of ribosome"/>
    <property type="evidence" value="ECO:0007669"/>
    <property type="project" value="InterPro"/>
</dbReference>
<dbReference type="GO" id="GO:0006412">
    <property type="term" value="P:translation"/>
    <property type="evidence" value="ECO:0007669"/>
    <property type="project" value="UniProtKB-UniRule"/>
</dbReference>
<dbReference type="CDD" id="cd00349">
    <property type="entry name" value="Ribosomal_L11"/>
    <property type="match status" value="1"/>
</dbReference>
<dbReference type="FunFam" id="1.10.10.250:FF:000001">
    <property type="entry name" value="50S ribosomal protein L11"/>
    <property type="match status" value="1"/>
</dbReference>
<dbReference type="FunFam" id="3.30.1550.10:FF:000001">
    <property type="entry name" value="50S ribosomal protein L11"/>
    <property type="match status" value="1"/>
</dbReference>
<dbReference type="Gene3D" id="1.10.10.250">
    <property type="entry name" value="Ribosomal protein L11, C-terminal domain"/>
    <property type="match status" value="1"/>
</dbReference>
<dbReference type="Gene3D" id="3.30.1550.10">
    <property type="entry name" value="Ribosomal protein L11/L12, N-terminal domain"/>
    <property type="match status" value="1"/>
</dbReference>
<dbReference type="HAMAP" id="MF_00736">
    <property type="entry name" value="Ribosomal_uL11"/>
    <property type="match status" value="1"/>
</dbReference>
<dbReference type="InterPro" id="IPR000911">
    <property type="entry name" value="Ribosomal_uL11"/>
</dbReference>
<dbReference type="InterPro" id="IPR006519">
    <property type="entry name" value="Ribosomal_uL11_bac-typ"/>
</dbReference>
<dbReference type="InterPro" id="IPR020783">
    <property type="entry name" value="Ribosomal_uL11_C"/>
</dbReference>
<dbReference type="InterPro" id="IPR036769">
    <property type="entry name" value="Ribosomal_uL11_C_sf"/>
</dbReference>
<dbReference type="InterPro" id="IPR020785">
    <property type="entry name" value="Ribosomal_uL11_CS"/>
</dbReference>
<dbReference type="InterPro" id="IPR020784">
    <property type="entry name" value="Ribosomal_uL11_N"/>
</dbReference>
<dbReference type="InterPro" id="IPR036796">
    <property type="entry name" value="Ribosomal_uL11_N_sf"/>
</dbReference>
<dbReference type="NCBIfam" id="TIGR01632">
    <property type="entry name" value="L11_bact"/>
    <property type="match status" value="1"/>
</dbReference>
<dbReference type="PANTHER" id="PTHR11661">
    <property type="entry name" value="60S RIBOSOMAL PROTEIN L12"/>
    <property type="match status" value="1"/>
</dbReference>
<dbReference type="PANTHER" id="PTHR11661:SF1">
    <property type="entry name" value="LARGE RIBOSOMAL SUBUNIT PROTEIN UL11M"/>
    <property type="match status" value="1"/>
</dbReference>
<dbReference type="Pfam" id="PF00298">
    <property type="entry name" value="Ribosomal_L11"/>
    <property type="match status" value="1"/>
</dbReference>
<dbReference type="Pfam" id="PF03946">
    <property type="entry name" value="Ribosomal_L11_N"/>
    <property type="match status" value="1"/>
</dbReference>
<dbReference type="SMART" id="SM00649">
    <property type="entry name" value="RL11"/>
    <property type="match status" value="1"/>
</dbReference>
<dbReference type="SUPFAM" id="SSF54747">
    <property type="entry name" value="Ribosomal L11/L12e N-terminal domain"/>
    <property type="match status" value="1"/>
</dbReference>
<dbReference type="SUPFAM" id="SSF46906">
    <property type="entry name" value="Ribosomal protein L11, C-terminal domain"/>
    <property type="match status" value="1"/>
</dbReference>
<dbReference type="PROSITE" id="PS00359">
    <property type="entry name" value="RIBOSOMAL_L11"/>
    <property type="match status" value="1"/>
</dbReference>
<organism>
    <name type="scientific">Escherichia coli O157:H7 (strain EC4115 / EHEC)</name>
    <dbReference type="NCBI Taxonomy" id="444450"/>
    <lineage>
        <taxon>Bacteria</taxon>
        <taxon>Pseudomonadati</taxon>
        <taxon>Pseudomonadota</taxon>
        <taxon>Gammaproteobacteria</taxon>
        <taxon>Enterobacterales</taxon>
        <taxon>Enterobacteriaceae</taxon>
        <taxon>Escherichia</taxon>
    </lineage>
</organism>
<sequence length="142" mass="14875">MAKKVQAYVKLQVAAGMANPSPPVGPALGQQGVNIMEFCKAFNAKTDSIEKGLPIPVVITVYADRSFTFVTKTPPAAVLLKKAAGIKSGSGKPNKDKVGKISRAQLQEIAQTKAADMTGADIEAMTRSIEGTARSMGLVVED</sequence>
<keyword id="KW-0488">Methylation</keyword>
<keyword id="KW-0687">Ribonucleoprotein</keyword>
<keyword id="KW-0689">Ribosomal protein</keyword>
<keyword id="KW-0694">RNA-binding</keyword>
<keyword id="KW-0699">rRNA-binding</keyword>